<dbReference type="EC" id="3.11.1.1" evidence="1"/>
<dbReference type="EMBL" id="CP000485">
    <property type="protein sequence ID" value="ABK84541.1"/>
    <property type="status" value="ALT_INIT"/>
    <property type="molecule type" value="Genomic_DNA"/>
</dbReference>
<dbReference type="RefSeq" id="WP_000687380.1">
    <property type="nucleotide sequence ID" value="NC_008600.1"/>
</dbReference>
<dbReference type="SMR" id="A0RBE8"/>
<dbReference type="KEGG" id="btl:BALH_1189"/>
<dbReference type="HOGENOM" id="CLU_045011_12_0_9"/>
<dbReference type="GO" id="GO:0005829">
    <property type="term" value="C:cytosol"/>
    <property type="evidence" value="ECO:0007669"/>
    <property type="project" value="TreeGrafter"/>
</dbReference>
<dbReference type="GO" id="GO:0000287">
    <property type="term" value="F:magnesium ion binding"/>
    <property type="evidence" value="ECO:0007669"/>
    <property type="project" value="UniProtKB-UniRule"/>
</dbReference>
<dbReference type="GO" id="GO:0008967">
    <property type="term" value="F:phosphoglycolate phosphatase activity"/>
    <property type="evidence" value="ECO:0007669"/>
    <property type="project" value="TreeGrafter"/>
</dbReference>
<dbReference type="GO" id="GO:0050194">
    <property type="term" value="F:phosphonoacetaldehyde hydrolase activity"/>
    <property type="evidence" value="ECO:0007669"/>
    <property type="project" value="UniProtKB-UniRule"/>
</dbReference>
<dbReference type="GO" id="GO:0006281">
    <property type="term" value="P:DNA repair"/>
    <property type="evidence" value="ECO:0007669"/>
    <property type="project" value="TreeGrafter"/>
</dbReference>
<dbReference type="GO" id="GO:0019700">
    <property type="term" value="P:organic phosphonate catabolic process"/>
    <property type="evidence" value="ECO:0007669"/>
    <property type="project" value="InterPro"/>
</dbReference>
<dbReference type="CDD" id="cd02586">
    <property type="entry name" value="HAD_PHN"/>
    <property type="match status" value="1"/>
</dbReference>
<dbReference type="FunFam" id="1.10.150.240:FF:000006">
    <property type="entry name" value="Phosphonoacetaldehyde hydrolase"/>
    <property type="match status" value="1"/>
</dbReference>
<dbReference type="FunFam" id="3.40.50.1000:FF:000072">
    <property type="entry name" value="Phosphonoacetaldehyde hydrolase"/>
    <property type="match status" value="1"/>
</dbReference>
<dbReference type="Gene3D" id="3.40.50.1000">
    <property type="entry name" value="HAD superfamily/HAD-like"/>
    <property type="match status" value="1"/>
</dbReference>
<dbReference type="Gene3D" id="1.10.150.240">
    <property type="entry name" value="Putative phosphatase, domain 2"/>
    <property type="match status" value="1"/>
</dbReference>
<dbReference type="HAMAP" id="MF_01375">
    <property type="entry name" value="PhnX"/>
    <property type="match status" value="1"/>
</dbReference>
<dbReference type="InterPro" id="IPR050155">
    <property type="entry name" value="HAD-like_hydrolase_sf"/>
</dbReference>
<dbReference type="InterPro" id="IPR036412">
    <property type="entry name" value="HAD-like_sf"/>
</dbReference>
<dbReference type="InterPro" id="IPR006439">
    <property type="entry name" value="HAD-SF_hydro_IA"/>
</dbReference>
<dbReference type="InterPro" id="IPR023214">
    <property type="entry name" value="HAD_sf"/>
</dbReference>
<dbReference type="InterPro" id="IPR023198">
    <property type="entry name" value="PGP-like_dom2"/>
</dbReference>
<dbReference type="InterPro" id="IPR006323">
    <property type="entry name" value="Phosphonoacetald_hydro"/>
</dbReference>
<dbReference type="NCBIfam" id="TIGR01549">
    <property type="entry name" value="HAD-SF-IA-v1"/>
    <property type="match status" value="1"/>
</dbReference>
<dbReference type="NCBIfam" id="TIGR01509">
    <property type="entry name" value="HAD-SF-IA-v3"/>
    <property type="match status" value="1"/>
</dbReference>
<dbReference type="NCBIfam" id="TIGR01422">
    <property type="entry name" value="phosphonatase"/>
    <property type="match status" value="1"/>
</dbReference>
<dbReference type="PANTHER" id="PTHR43434">
    <property type="entry name" value="PHOSPHOGLYCOLATE PHOSPHATASE"/>
    <property type="match status" value="1"/>
</dbReference>
<dbReference type="PANTHER" id="PTHR43434:SF19">
    <property type="entry name" value="PHOSPHONOACETALDEHYDE HYDROLASE"/>
    <property type="match status" value="1"/>
</dbReference>
<dbReference type="Pfam" id="PF00702">
    <property type="entry name" value="Hydrolase"/>
    <property type="match status" value="1"/>
</dbReference>
<dbReference type="SFLD" id="SFLDS00003">
    <property type="entry name" value="Haloacid_Dehalogenase"/>
    <property type="match status" value="1"/>
</dbReference>
<dbReference type="SFLD" id="SFLDF00038">
    <property type="entry name" value="phosphonoacetaldehyde_hydrolas"/>
    <property type="match status" value="1"/>
</dbReference>
<dbReference type="SUPFAM" id="SSF56784">
    <property type="entry name" value="HAD-like"/>
    <property type="match status" value="1"/>
</dbReference>
<sequence length="264" mass="30058">MKIEAVIFDWAGTTVDYGCFAPLEVFMEIFYKRGVGITAEEARKPMGLLKIDHVRALTEMPRIANEWNRIFGQLPTETDIQEMYEEFEEILFAILPRYASPIHGVKEVIASLRERGIKIGSTTGYTREMMDIVAKEAALQGYKPDFLVTPDDVPAGRPYPWMCYKNAMELGVYPMNHMIKIGDTVSDMKEGRNAGMWTVGVILGSSELGLSEEEVENMDSAELREKIEVVRNRFVENGAHFTIETMQELESVMERIEKQELIIS</sequence>
<reference key="1">
    <citation type="journal article" date="2007" name="J. Bacteriol.">
        <title>The complete genome sequence of Bacillus thuringiensis Al Hakam.</title>
        <authorList>
            <person name="Challacombe J.F."/>
            <person name="Altherr M.R."/>
            <person name="Xie G."/>
            <person name="Bhotika S.S."/>
            <person name="Brown N."/>
            <person name="Bruce D."/>
            <person name="Campbell C.S."/>
            <person name="Campbell M.L."/>
            <person name="Chen J."/>
            <person name="Chertkov O."/>
            <person name="Cleland C."/>
            <person name="Dimitrijevic M."/>
            <person name="Doggett N.A."/>
            <person name="Fawcett J.J."/>
            <person name="Glavina T."/>
            <person name="Goodwin L.A."/>
            <person name="Green L.D."/>
            <person name="Han C.S."/>
            <person name="Hill K.K."/>
            <person name="Hitchcock P."/>
            <person name="Jackson P.J."/>
            <person name="Keim P."/>
            <person name="Kewalramani A.R."/>
            <person name="Longmire J."/>
            <person name="Lucas S."/>
            <person name="Malfatti S."/>
            <person name="Martinez D."/>
            <person name="McMurry K."/>
            <person name="Meincke L.J."/>
            <person name="Misra M."/>
            <person name="Moseman B.L."/>
            <person name="Mundt M."/>
            <person name="Munk A.C."/>
            <person name="Okinaka R.T."/>
            <person name="Parson-Quintana B."/>
            <person name="Reilly L.P."/>
            <person name="Richardson P."/>
            <person name="Robinson D.L."/>
            <person name="Saunders E."/>
            <person name="Tapia R."/>
            <person name="Tesmer J.G."/>
            <person name="Thayer N."/>
            <person name="Thompson L.S."/>
            <person name="Tice H."/>
            <person name="Ticknor L.O."/>
            <person name="Wills P.L."/>
            <person name="Gilna P."/>
            <person name="Brettin T.S."/>
        </authorList>
    </citation>
    <scope>NUCLEOTIDE SEQUENCE [LARGE SCALE GENOMIC DNA]</scope>
    <source>
        <strain>Al Hakam</strain>
    </source>
</reference>
<proteinExistence type="inferred from homology"/>
<feature type="chain" id="PRO_0000284579" description="Phosphonoacetaldehyde hydrolase">
    <location>
        <begin position="1"/>
        <end position="264"/>
    </location>
</feature>
<feature type="active site" description="Nucleophile" evidence="1">
    <location>
        <position position="9"/>
    </location>
</feature>
<feature type="active site" description="Schiff-base intermediate with substrate" evidence="1">
    <location>
        <position position="50"/>
    </location>
</feature>
<feature type="binding site" evidence="1">
    <location>
        <position position="9"/>
    </location>
    <ligand>
        <name>Mg(2+)</name>
        <dbReference type="ChEBI" id="CHEBI:18420"/>
    </ligand>
</feature>
<feature type="binding site" evidence="1">
    <location>
        <position position="11"/>
    </location>
    <ligand>
        <name>Mg(2+)</name>
        <dbReference type="ChEBI" id="CHEBI:18420"/>
    </ligand>
</feature>
<feature type="binding site" evidence="1">
    <location>
        <position position="183"/>
    </location>
    <ligand>
        <name>Mg(2+)</name>
        <dbReference type="ChEBI" id="CHEBI:18420"/>
    </ligand>
</feature>
<organism>
    <name type="scientific">Bacillus thuringiensis (strain Al Hakam)</name>
    <dbReference type="NCBI Taxonomy" id="412694"/>
    <lineage>
        <taxon>Bacteria</taxon>
        <taxon>Bacillati</taxon>
        <taxon>Bacillota</taxon>
        <taxon>Bacilli</taxon>
        <taxon>Bacillales</taxon>
        <taxon>Bacillaceae</taxon>
        <taxon>Bacillus</taxon>
        <taxon>Bacillus cereus group</taxon>
    </lineage>
</organism>
<comment type="function">
    <text evidence="1">Involved in phosphonate degradation.</text>
</comment>
<comment type="catalytic activity">
    <reaction evidence="1">
        <text>phosphonoacetaldehyde + H2O = acetaldehyde + phosphate + H(+)</text>
        <dbReference type="Rhea" id="RHEA:18905"/>
        <dbReference type="ChEBI" id="CHEBI:15343"/>
        <dbReference type="ChEBI" id="CHEBI:15377"/>
        <dbReference type="ChEBI" id="CHEBI:15378"/>
        <dbReference type="ChEBI" id="CHEBI:43474"/>
        <dbReference type="ChEBI" id="CHEBI:58383"/>
        <dbReference type="EC" id="3.11.1.1"/>
    </reaction>
</comment>
<comment type="cofactor">
    <cofactor evidence="1">
        <name>Mg(2+)</name>
        <dbReference type="ChEBI" id="CHEBI:18420"/>
    </cofactor>
    <text evidence="1">Binds 1 Mg(2+) ion per subunit.</text>
</comment>
<comment type="subunit">
    <text evidence="1">Homodimer.</text>
</comment>
<comment type="similarity">
    <text evidence="1">Belongs to the HAD-like hydrolase superfamily. PhnX family.</text>
</comment>
<comment type="sequence caution" evidence="2">
    <conflict type="erroneous initiation">
        <sequence resource="EMBL-CDS" id="ABK84541"/>
    </conflict>
</comment>
<keyword id="KW-0378">Hydrolase</keyword>
<keyword id="KW-0460">Magnesium</keyword>
<keyword id="KW-0479">Metal-binding</keyword>
<keyword id="KW-0704">Schiff base</keyword>
<protein>
    <recommendedName>
        <fullName evidence="1">Phosphonoacetaldehyde hydrolase</fullName>
        <shortName evidence="1">Phosphonatase</shortName>
        <ecNumber evidence="1">3.11.1.1</ecNumber>
    </recommendedName>
    <alternativeName>
        <fullName evidence="1">Phosphonoacetaldehyde phosphonohydrolase</fullName>
    </alternativeName>
</protein>
<gene>
    <name evidence="1" type="primary">phnX</name>
    <name type="ordered locus">BALH_1189</name>
</gene>
<name>PHNX_BACAH</name>
<accession>A0RBE8</accession>
<evidence type="ECO:0000255" key="1">
    <source>
        <dbReference type="HAMAP-Rule" id="MF_01375"/>
    </source>
</evidence>
<evidence type="ECO:0000305" key="2"/>